<keyword id="KW-0597">Phosphoprotein</keyword>
<keyword id="KW-1185">Reference proteome</keyword>
<keyword id="KW-0804">Transcription</keyword>
<keyword id="KW-0805">Transcription regulation</keyword>
<accession>Q0PEV3</accession>
<accession>C5AW21</accession>
<name>PHYR_METEA</name>
<evidence type="ECO:0000255" key="1">
    <source>
        <dbReference type="PROSITE-ProRule" id="PRU00169"/>
    </source>
</evidence>
<evidence type="ECO:0000269" key="2">
    <source>
    </source>
</evidence>
<evidence type="ECO:0000305" key="3"/>
<organism>
    <name type="scientific">Methylorubrum extorquens (strain ATCC 14718 / DSM 1338 / JCM 2805 / NCIMB 9133 / AM1)</name>
    <name type="common">Methylobacterium extorquens</name>
    <dbReference type="NCBI Taxonomy" id="272630"/>
    <lineage>
        <taxon>Bacteria</taxon>
        <taxon>Pseudomonadati</taxon>
        <taxon>Pseudomonadota</taxon>
        <taxon>Alphaproteobacteria</taxon>
        <taxon>Hyphomicrobiales</taxon>
        <taxon>Methylobacteriaceae</taxon>
        <taxon>Methylorubrum</taxon>
    </lineage>
</organism>
<proteinExistence type="evidence at protein level"/>
<dbReference type="EMBL" id="DQ845291">
    <property type="protein sequence ID" value="ABH05969.1"/>
    <property type="molecule type" value="Genomic_DNA"/>
</dbReference>
<dbReference type="EMBL" id="CP001510">
    <property type="protein sequence ID" value="ACS40857.1"/>
    <property type="status" value="ALT_INIT"/>
    <property type="molecule type" value="Genomic_DNA"/>
</dbReference>
<dbReference type="RefSeq" id="WP_003599470.1">
    <property type="nucleotide sequence ID" value="NC_012808.1"/>
</dbReference>
<dbReference type="SMR" id="Q0PEV3"/>
<dbReference type="DIP" id="DIP-58555N"/>
<dbReference type="IntAct" id="Q0PEV3">
    <property type="interactions" value="1"/>
</dbReference>
<dbReference type="STRING" id="272630.MexAM1_META1p3110"/>
<dbReference type="KEGG" id="mea:Mex_1p3110"/>
<dbReference type="eggNOG" id="COG0784">
    <property type="taxonomic scope" value="Bacteria"/>
</dbReference>
<dbReference type="HOGENOM" id="CLU_089963_0_0_5"/>
<dbReference type="OrthoDB" id="9786101at2"/>
<dbReference type="Proteomes" id="UP000009081">
    <property type="component" value="Chromosome"/>
</dbReference>
<dbReference type="GO" id="GO:0000160">
    <property type="term" value="P:phosphorelay signal transduction system"/>
    <property type="evidence" value="ECO:0007669"/>
    <property type="project" value="InterPro"/>
</dbReference>
<dbReference type="CDD" id="cd17540">
    <property type="entry name" value="REC_PhyR"/>
    <property type="match status" value="1"/>
</dbReference>
<dbReference type="Gene3D" id="1.10.1740.10">
    <property type="match status" value="1"/>
</dbReference>
<dbReference type="Gene3D" id="3.40.50.2300">
    <property type="match status" value="1"/>
</dbReference>
<dbReference type="Gene3D" id="1.10.10.10">
    <property type="entry name" value="Winged helix-like DNA-binding domain superfamily/Winged helix DNA-binding domain"/>
    <property type="match status" value="1"/>
</dbReference>
<dbReference type="InterPro" id="IPR050595">
    <property type="entry name" value="Bact_response_regulator"/>
</dbReference>
<dbReference type="InterPro" id="IPR011006">
    <property type="entry name" value="CheY-like_superfamily"/>
</dbReference>
<dbReference type="InterPro" id="IPR053866">
    <property type="entry name" value="PhyR_sigma2"/>
</dbReference>
<dbReference type="InterPro" id="IPR053867">
    <property type="entry name" value="PhyR_sigma4"/>
</dbReference>
<dbReference type="InterPro" id="IPR014605">
    <property type="entry name" value="Sig_resp-reg_PhyR"/>
</dbReference>
<dbReference type="InterPro" id="IPR001789">
    <property type="entry name" value="Sig_transdc_resp-reg_receiver"/>
</dbReference>
<dbReference type="InterPro" id="IPR036388">
    <property type="entry name" value="WH-like_DNA-bd_sf"/>
</dbReference>
<dbReference type="NCBIfam" id="NF006623">
    <property type="entry name" value="PRK09191.1"/>
    <property type="match status" value="1"/>
</dbReference>
<dbReference type="PANTHER" id="PTHR44591:SF3">
    <property type="entry name" value="RESPONSE REGULATORY DOMAIN-CONTAINING PROTEIN"/>
    <property type="match status" value="1"/>
</dbReference>
<dbReference type="PANTHER" id="PTHR44591">
    <property type="entry name" value="STRESS RESPONSE REGULATOR PROTEIN 1"/>
    <property type="match status" value="1"/>
</dbReference>
<dbReference type="Pfam" id="PF22233">
    <property type="entry name" value="PhyR_sigma-like"/>
    <property type="match status" value="1"/>
</dbReference>
<dbReference type="Pfam" id="PF22029">
    <property type="entry name" value="PhyR_sigma2"/>
    <property type="match status" value="1"/>
</dbReference>
<dbReference type="Pfam" id="PF00072">
    <property type="entry name" value="Response_reg"/>
    <property type="match status" value="1"/>
</dbReference>
<dbReference type="PIRSF" id="PIRSF036400">
    <property type="entry name" value="RR_Ctr_UCP036400"/>
    <property type="match status" value="1"/>
</dbReference>
<dbReference type="SMART" id="SM00448">
    <property type="entry name" value="REC"/>
    <property type="match status" value="1"/>
</dbReference>
<dbReference type="SUPFAM" id="SSF52172">
    <property type="entry name" value="CheY-like"/>
    <property type="match status" value="1"/>
</dbReference>
<dbReference type="PROSITE" id="PS50110">
    <property type="entry name" value="RESPONSE_REGULATORY"/>
    <property type="match status" value="1"/>
</dbReference>
<feature type="chain" id="PRO_0000259889" description="Phyllosphere-induced regulator PhyR">
    <location>
        <begin position="1"/>
        <end position="267"/>
    </location>
</feature>
<feature type="domain" description="Response regulatory" evidence="1">
    <location>
        <begin position="139"/>
        <end position="253"/>
    </location>
</feature>
<feature type="modified residue" description="4-aspartylphosphate" evidence="1">
    <location>
        <position position="190"/>
    </location>
</feature>
<gene>
    <name type="primary">phyR</name>
    <name type="ordered locus">MexAM1_META1p3110</name>
</gene>
<comment type="function">
    <text>Key regulator for adaptation to epiphytic life (leaf colonizing) of the bacterium. Positively regulates several genes including katE, sodA, hsp20, dps and gloA. However, it is not known whether this regulation is direct or indirect. Also induces several dehydrogenases.</text>
</comment>
<comment type="interaction">
    <interactant intactId="EBI-15757805">
        <id>Q0PEV3</id>
    </interactant>
    <interactant intactId="EBI-15757821">
        <id>C5AW20</id>
        <label>nepR</label>
    </interactant>
    <organismsDiffer>false</organismsDiffer>
    <experiments>2</experiments>
</comment>
<comment type="disruption phenotype">
    <text evidence="2">The growth rate of the phyR deletion strain is the same as in the wild-type strain when plant colonization is mimicked in vitro in the presence of succinate and methanol. However, in planta colonization experiments show a severe growth defect of the phyR deletion mutant.</text>
</comment>
<comment type="sequence caution" evidence="3">
    <conflict type="erroneous initiation">
        <sequence resource="EMBL-CDS" id="ACS40857"/>
    </conflict>
</comment>
<protein>
    <recommendedName>
        <fullName>Phyllosphere-induced regulator PhyR</fullName>
    </recommendedName>
</protein>
<reference key="1">
    <citation type="journal article" date="2006" name="Proc. Natl. Acad. Sci. U.S.A.">
        <title>A proteomic study of Methylobacterium extorquens reveals a response regulator essential for epiphytic growth.</title>
        <authorList>
            <person name="Gourion B."/>
            <person name="Rossignol M."/>
            <person name="Vorholt J.A."/>
        </authorList>
    </citation>
    <scope>NUCLEOTIDE SEQUENCE [GENOMIC DNA]</scope>
    <scope>DISRUPTION PHENOTYPE</scope>
</reference>
<reference key="2">
    <citation type="journal article" date="2009" name="PLoS ONE">
        <title>Methylobacterium genome sequences: a reference blueprint to investigate microbial metabolism of C1 compounds from natural and industrial sources.</title>
        <authorList>
            <person name="Vuilleumier S."/>
            <person name="Chistoserdova L."/>
            <person name="Lee M.-C."/>
            <person name="Bringel F."/>
            <person name="Lajus A."/>
            <person name="Zhou Y."/>
            <person name="Gourion B."/>
            <person name="Barbe V."/>
            <person name="Chang J."/>
            <person name="Cruveiller S."/>
            <person name="Dossat C."/>
            <person name="Gillett W."/>
            <person name="Gruffaz C."/>
            <person name="Haugen E."/>
            <person name="Hourcade E."/>
            <person name="Levy R."/>
            <person name="Mangenot S."/>
            <person name="Muller E."/>
            <person name="Nadalig T."/>
            <person name="Pagni M."/>
            <person name="Penny C."/>
            <person name="Peyraud R."/>
            <person name="Robinson D.G."/>
            <person name="Roche D."/>
            <person name="Rouy Z."/>
            <person name="Saenampechek C."/>
            <person name="Salvignol G."/>
            <person name="Vallenet D."/>
            <person name="Wu Z."/>
            <person name="Marx C.J."/>
            <person name="Vorholt J.A."/>
            <person name="Olson M.V."/>
            <person name="Kaul R."/>
            <person name="Weissenbach J."/>
            <person name="Medigue C."/>
            <person name="Lidstrom M.E."/>
        </authorList>
    </citation>
    <scope>NUCLEOTIDE SEQUENCE [LARGE SCALE GENOMIC DNA]</scope>
    <source>
        <strain>ATCC 14718 / DSM 1338 / JCM 2805 / NCIMB 9133 / AM1</strain>
    </source>
</reference>
<sequence>MSTAQLVVQHLPYLRRYARALTGSQVAGDAYVAATLETLVNEPETLGRSTNVKADLFRVFTRIWNSLSVNGHSDQVQHDLPAEVRLGQITPLPRQAFLLSCLEGFSEEDAGVILDVDVSKVRDLVDEAGRELAADMATEILIIEDEPLIAMDLEALVEGLGHNVIGVARTRTEAVKIASESKRPGLILADIQLADGSSGLDAVNDLLKTFEVPVIFITAYPERFLTGERPEPAFLIAKPFQPANVSAVISQALFFQQSARRREAHNA</sequence>